<keyword id="KW-0963">Cytoplasm</keyword>
<keyword id="KW-0274">FAD</keyword>
<keyword id="KW-0285">Flavoprotein</keyword>
<keyword id="KW-0489">Methyltransferase</keyword>
<keyword id="KW-0511">Multifunctional enzyme</keyword>
<keyword id="KW-0560">Oxidoreductase</keyword>
<keyword id="KW-0949">S-adenosyl-L-methionine</keyword>
<keyword id="KW-0808">Transferase</keyword>
<keyword id="KW-0819">tRNA processing</keyword>
<comment type="function">
    <text evidence="1">Catalyzes the last two steps in the biosynthesis of 5-methylaminomethyl-2-thiouridine (mnm(5)s(2)U) at the wobble position (U34) in tRNA. Catalyzes the FAD-dependent demodification of cmnm(5)s(2)U34 to nm(5)s(2)U34, followed by the transfer of a methyl group from S-adenosyl-L-methionine to nm(5)s(2)U34, to form mnm(5)s(2)U34.</text>
</comment>
<comment type="catalytic activity">
    <reaction evidence="1">
        <text>5-aminomethyl-2-thiouridine(34) in tRNA + S-adenosyl-L-methionine = 5-methylaminomethyl-2-thiouridine(34) in tRNA + S-adenosyl-L-homocysteine + H(+)</text>
        <dbReference type="Rhea" id="RHEA:19569"/>
        <dbReference type="Rhea" id="RHEA-COMP:10195"/>
        <dbReference type="Rhea" id="RHEA-COMP:10197"/>
        <dbReference type="ChEBI" id="CHEBI:15378"/>
        <dbReference type="ChEBI" id="CHEBI:57856"/>
        <dbReference type="ChEBI" id="CHEBI:59789"/>
        <dbReference type="ChEBI" id="CHEBI:74454"/>
        <dbReference type="ChEBI" id="CHEBI:74455"/>
        <dbReference type="EC" id="2.1.1.61"/>
    </reaction>
</comment>
<comment type="cofactor">
    <cofactor evidence="1">
        <name>FAD</name>
        <dbReference type="ChEBI" id="CHEBI:57692"/>
    </cofactor>
</comment>
<comment type="subcellular location">
    <subcellularLocation>
        <location evidence="1">Cytoplasm</location>
    </subcellularLocation>
</comment>
<comment type="similarity">
    <text evidence="1">In the N-terminal section; belongs to the methyltransferase superfamily. tRNA (mnm(5)s(2)U34)-methyltransferase family.</text>
</comment>
<comment type="similarity">
    <text evidence="1">In the C-terminal section; belongs to the DAO family.</text>
</comment>
<feature type="chain" id="PRO_0000348032" description="tRNA 5-methylaminomethyl-2-thiouridine biosynthesis bifunctional protein MnmC">
    <location>
        <begin position="1"/>
        <end position="680"/>
    </location>
</feature>
<feature type="region of interest" description="tRNA (mnm(5)s(2)U34)-methyltransferase">
    <location>
        <begin position="1"/>
        <end position="267"/>
    </location>
</feature>
<feature type="region of interest" description="FAD-dependent cmnm(5)s(2)U34 oxidoreductase">
    <location>
        <begin position="273"/>
        <end position="680"/>
    </location>
</feature>
<dbReference type="EC" id="2.1.1.61" evidence="1"/>
<dbReference type="EC" id="1.5.-.-" evidence="1"/>
<dbReference type="EMBL" id="CP000681">
    <property type="protein sequence ID" value="ABP76167.1"/>
    <property type="molecule type" value="Genomic_DNA"/>
</dbReference>
<dbReference type="SMR" id="A4Y884"/>
<dbReference type="STRING" id="319224.Sputcn32_2446"/>
<dbReference type="KEGG" id="spc:Sputcn32_2446"/>
<dbReference type="eggNOG" id="COG0665">
    <property type="taxonomic scope" value="Bacteria"/>
</dbReference>
<dbReference type="eggNOG" id="COG4121">
    <property type="taxonomic scope" value="Bacteria"/>
</dbReference>
<dbReference type="HOGENOM" id="CLU_022427_2_1_6"/>
<dbReference type="GO" id="GO:0005737">
    <property type="term" value="C:cytoplasm"/>
    <property type="evidence" value="ECO:0007669"/>
    <property type="project" value="UniProtKB-SubCell"/>
</dbReference>
<dbReference type="GO" id="GO:0050660">
    <property type="term" value="F:flavin adenine dinucleotide binding"/>
    <property type="evidence" value="ECO:0007669"/>
    <property type="project" value="UniProtKB-UniRule"/>
</dbReference>
<dbReference type="GO" id="GO:0016645">
    <property type="term" value="F:oxidoreductase activity, acting on the CH-NH group of donors"/>
    <property type="evidence" value="ECO:0007669"/>
    <property type="project" value="InterPro"/>
</dbReference>
<dbReference type="GO" id="GO:0004808">
    <property type="term" value="F:tRNA (5-methylaminomethyl-2-thiouridylate)(34)-methyltransferase activity"/>
    <property type="evidence" value="ECO:0007669"/>
    <property type="project" value="UniProtKB-EC"/>
</dbReference>
<dbReference type="GO" id="GO:0032259">
    <property type="term" value="P:methylation"/>
    <property type="evidence" value="ECO:0007669"/>
    <property type="project" value="UniProtKB-KW"/>
</dbReference>
<dbReference type="GO" id="GO:0002098">
    <property type="term" value="P:tRNA wobble uridine modification"/>
    <property type="evidence" value="ECO:0007669"/>
    <property type="project" value="TreeGrafter"/>
</dbReference>
<dbReference type="Gene3D" id="3.30.9.10">
    <property type="entry name" value="D-Amino Acid Oxidase, subunit A, domain 2"/>
    <property type="match status" value="1"/>
</dbReference>
<dbReference type="Gene3D" id="3.50.50.60">
    <property type="entry name" value="FAD/NAD(P)-binding domain"/>
    <property type="match status" value="1"/>
</dbReference>
<dbReference type="Gene3D" id="3.40.50.150">
    <property type="entry name" value="Vaccinia Virus protein VP39"/>
    <property type="match status" value="1"/>
</dbReference>
<dbReference type="HAMAP" id="MF_01102">
    <property type="entry name" value="MnmC"/>
    <property type="match status" value="1"/>
</dbReference>
<dbReference type="InterPro" id="IPR006076">
    <property type="entry name" value="FAD-dep_OxRdtase"/>
</dbReference>
<dbReference type="InterPro" id="IPR036188">
    <property type="entry name" value="FAD/NAD-bd_sf"/>
</dbReference>
<dbReference type="InterPro" id="IPR029063">
    <property type="entry name" value="SAM-dependent_MTases_sf"/>
</dbReference>
<dbReference type="InterPro" id="IPR023032">
    <property type="entry name" value="tRNA_MAMT_biosynth_bifunc_MnmC"/>
</dbReference>
<dbReference type="InterPro" id="IPR017610">
    <property type="entry name" value="tRNA_S-uridine_synth_MnmC_C"/>
</dbReference>
<dbReference type="NCBIfam" id="TIGR03197">
    <property type="entry name" value="MnmC_Cterm"/>
    <property type="match status" value="1"/>
</dbReference>
<dbReference type="PANTHER" id="PTHR13847">
    <property type="entry name" value="SARCOSINE DEHYDROGENASE-RELATED"/>
    <property type="match status" value="1"/>
</dbReference>
<dbReference type="PANTHER" id="PTHR13847:SF283">
    <property type="entry name" value="TRNA 5-METHYLAMINOMETHYL-2-THIOURIDINE BIOSYNTHESIS BIFUNCTIONAL PROTEIN MNMC"/>
    <property type="match status" value="1"/>
</dbReference>
<dbReference type="Pfam" id="PF01266">
    <property type="entry name" value="DAO"/>
    <property type="match status" value="1"/>
</dbReference>
<dbReference type="SUPFAM" id="SSF51905">
    <property type="entry name" value="FAD/NAD(P)-binding domain"/>
    <property type="match status" value="1"/>
</dbReference>
<accession>A4Y884</accession>
<sequence length="680" mass="75711">MTAEPNKPCQIKRDYPQLINLYPATAHNDAHYLSKLSIYQQRVFEAHSQQKLLVLGQMGLGNGLELLSWWRTQTNPNQRLLLKVFEPNPINAYELKLLWDQSASLAKVPELELLAQCLLHTEPTAIIGCQRLIFDDGRTTIDLHFGDIQSQLSSLIHSPLHPVQHWLVLPHLQNGLHQQIHWQMAKLSDDSATVATIGLNESSGLSETTVNRFQACGFEVRDFTCAEIQTNPQPDAILLHERHVLRRQDAKAYAFNPMAAILSSDAPSSIAIIGGGLASAHLALSLAERGQSTQIFCKDAKLGQGASGNRQGAIYPLLTPENDELSRFFQQAFLFSRRRVQALTSAPAPNQTPISHNFCGVLQTAHDERSQLRLDKIIQSQNWPSEIAYRVDAQQANCLANINIDKSGFFYPLAGWVCPYEYAEAALQKAQQLTAVKLHLETEILEIEHQSEGWYLITAKHRFGPFAQVVLANGAALTQFDASNKLQISPFRGQVSHVPAQFQLSQLATVLCANGYLTPSHEGLHCLGASYVKEPKHLDFCPQEQQENLAKMHESYPNQPWLEDIDMSGNNARVGVRMVTRDHFPMMGCAPDVAQIIKDYAEHQLTKESRHYWQTTPAPVHEGLYILGGLGSRGLSSGPLAAECLAAQLCGEPIPLDKATLCKLNPNRMWLRKLLKGKAL</sequence>
<protein>
    <recommendedName>
        <fullName evidence="1">tRNA 5-methylaminomethyl-2-thiouridine biosynthesis bifunctional protein MnmC</fullName>
        <shortName evidence="1">tRNA mnm(5)s(2)U biosynthesis bifunctional protein</shortName>
    </recommendedName>
    <domain>
        <recommendedName>
            <fullName evidence="1">tRNA (mnm(5)s(2)U34)-methyltransferase</fullName>
            <ecNumber evidence="1">2.1.1.61</ecNumber>
        </recommendedName>
    </domain>
    <domain>
        <recommendedName>
            <fullName evidence="1">FAD-dependent cmnm(5)s(2)U34 oxidoreductase</fullName>
            <ecNumber evidence="1">1.5.-.-</ecNumber>
        </recommendedName>
    </domain>
</protein>
<gene>
    <name evidence="1" type="primary">mnmC</name>
    <name type="ordered locus">Sputcn32_2446</name>
</gene>
<organism>
    <name type="scientific">Shewanella putrefaciens (strain CN-32 / ATCC BAA-453)</name>
    <dbReference type="NCBI Taxonomy" id="319224"/>
    <lineage>
        <taxon>Bacteria</taxon>
        <taxon>Pseudomonadati</taxon>
        <taxon>Pseudomonadota</taxon>
        <taxon>Gammaproteobacteria</taxon>
        <taxon>Alteromonadales</taxon>
        <taxon>Shewanellaceae</taxon>
        <taxon>Shewanella</taxon>
    </lineage>
</organism>
<evidence type="ECO:0000255" key="1">
    <source>
        <dbReference type="HAMAP-Rule" id="MF_01102"/>
    </source>
</evidence>
<reference key="1">
    <citation type="submission" date="2007-04" db="EMBL/GenBank/DDBJ databases">
        <title>Complete sequence of Shewanella putrefaciens CN-32.</title>
        <authorList>
            <consortium name="US DOE Joint Genome Institute"/>
            <person name="Copeland A."/>
            <person name="Lucas S."/>
            <person name="Lapidus A."/>
            <person name="Barry K."/>
            <person name="Detter J.C."/>
            <person name="Glavina del Rio T."/>
            <person name="Hammon N."/>
            <person name="Israni S."/>
            <person name="Dalin E."/>
            <person name="Tice H."/>
            <person name="Pitluck S."/>
            <person name="Chain P."/>
            <person name="Malfatti S."/>
            <person name="Shin M."/>
            <person name="Vergez L."/>
            <person name="Schmutz J."/>
            <person name="Larimer F."/>
            <person name="Land M."/>
            <person name="Hauser L."/>
            <person name="Kyrpides N."/>
            <person name="Mikhailova N."/>
            <person name="Romine M.F."/>
            <person name="Fredrickson J."/>
            <person name="Tiedje J."/>
            <person name="Richardson P."/>
        </authorList>
    </citation>
    <scope>NUCLEOTIDE SEQUENCE [LARGE SCALE GENOMIC DNA]</scope>
    <source>
        <strain>CN-32 / ATCC BAA-453</strain>
    </source>
</reference>
<name>MNMC_SHEPC</name>
<proteinExistence type="inferred from homology"/>